<gene>
    <name type="primary">corA</name>
    <name type="ordered locus">jhp_1263</name>
</gene>
<organism>
    <name type="scientific">Helicobacter pylori (strain J99 / ATCC 700824)</name>
    <name type="common">Campylobacter pylori J99</name>
    <dbReference type="NCBI Taxonomy" id="85963"/>
    <lineage>
        <taxon>Bacteria</taxon>
        <taxon>Pseudomonadati</taxon>
        <taxon>Campylobacterota</taxon>
        <taxon>Epsilonproteobacteria</taxon>
        <taxon>Campylobacterales</taxon>
        <taxon>Helicobacteraceae</taxon>
        <taxon>Helicobacter</taxon>
    </lineage>
</organism>
<evidence type="ECO:0000250" key="1">
    <source>
        <dbReference type="UniProtKB" id="P0ABI4"/>
    </source>
</evidence>
<evidence type="ECO:0000250" key="2">
    <source>
        <dbReference type="UniProtKB" id="Q9WZ31"/>
    </source>
</evidence>
<evidence type="ECO:0000255" key="3"/>
<evidence type="ECO:0000305" key="4"/>
<name>CORA_HELPJ</name>
<keyword id="KW-0997">Cell inner membrane</keyword>
<keyword id="KW-1003">Cell membrane</keyword>
<keyword id="KW-0406">Ion transport</keyword>
<keyword id="KW-0460">Magnesium</keyword>
<keyword id="KW-0472">Membrane</keyword>
<keyword id="KW-0812">Transmembrane</keyword>
<keyword id="KW-1133">Transmembrane helix</keyword>
<keyword id="KW-0813">Transport</keyword>
<dbReference type="EMBL" id="AE001439">
    <property type="protein sequence ID" value="AAD06836.1"/>
    <property type="molecule type" value="Genomic_DNA"/>
</dbReference>
<dbReference type="PIR" id="A71830">
    <property type="entry name" value="A71830"/>
</dbReference>
<dbReference type="RefSeq" id="WP_000248485.1">
    <property type="nucleotide sequence ID" value="NC_000921.1"/>
</dbReference>
<dbReference type="SMR" id="Q9ZJP2"/>
<dbReference type="KEGG" id="hpj:jhp_1263"/>
<dbReference type="PATRIC" id="fig|85963.30.peg.1308"/>
<dbReference type="eggNOG" id="COG0598">
    <property type="taxonomic scope" value="Bacteria"/>
</dbReference>
<dbReference type="Proteomes" id="UP000000804">
    <property type="component" value="Chromosome"/>
</dbReference>
<dbReference type="GO" id="GO:0005886">
    <property type="term" value="C:plasma membrane"/>
    <property type="evidence" value="ECO:0007669"/>
    <property type="project" value="UniProtKB-SubCell"/>
</dbReference>
<dbReference type="GO" id="GO:0015087">
    <property type="term" value="F:cobalt ion transmembrane transporter activity"/>
    <property type="evidence" value="ECO:0007669"/>
    <property type="project" value="InterPro"/>
</dbReference>
<dbReference type="GO" id="GO:0015095">
    <property type="term" value="F:magnesium ion transmembrane transporter activity"/>
    <property type="evidence" value="ECO:0007669"/>
    <property type="project" value="InterPro"/>
</dbReference>
<dbReference type="GO" id="GO:0015099">
    <property type="term" value="F:nickel cation transmembrane transporter activity"/>
    <property type="evidence" value="ECO:0007669"/>
    <property type="project" value="TreeGrafter"/>
</dbReference>
<dbReference type="FunFam" id="1.20.58.340:FF:000001">
    <property type="entry name" value="Magnesium transport protein CorA"/>
    <property type="match status" value="1"/>
</dbReference>
<dbReference type="Gene3D" id="3.30.460.20">
    <property type="entry name" value="CorA soluble domain-like"/>
    <property type="match status" value="1"/>
</dbReference>
<dbReference type="Gene3D" id="1.20.58.340">
    <property type="entry name" value="Magnesium transport protein CorA, transmembrane region"/>
    <property type="match status" value="1"/>
</dbReference>
<dbReference type="InterPro" id="IPR045861">
    <property type="entry name" value="CorA_cytoplasmic_dom"/>
</dbReference>
<dbReference type="InterPro" id="IPR050829">
    <property type="entry name" value="CorA_MIT"/>
</dbReference>
<dbReference type="InterPro" id="IPR045863">
    <property type="entry name" value="CorA_TM1_TM2"/>
</dbReference>
<dbReference type="InterPro" id="IPR004488">
    <property type="entry name" value="Mg/Co-transport_prot_CorA"/>
</dbReference>
<dbReference type="InterPro" id="IPR002523">
    <property type="entry name" value="MgTranspt_CorA/ZnTranspt_ZntB"/>
</dbReference>
<dbReference type="NCBIfam" id="TIGR00383">
    <property type="entry name" value="corA"/>
    <property type="match status" value="1"/>
</dbReference>
<dbReference type="PANTHER" id="PTHR47685">
    <property type="entry name" value="MAGNESIUM TRANSPORT PROTEIN CORA"/>
    <property type="match status" value="1"/>
</dbReference>
<dbReference type="PANTHER" id="PTHR47685:SF1">
    <property type="entry name" value="MAGNESIUM TRANSPORT PROTEIN CORA"/>
    <property type="match status" value="1"/>
</dbReference>
<dbReference type="Pfam" id="PF01544">
    <property type="entry name" value="CorA"/>
    <property type="match status" value="1"/>
</dbReference>
<dbReference type="SUPFAM" id="SSF143865">
    <property type="entry name" value="CorA soluble domain-like"/>
    <property type="match status" value="1"/>
</dbReference>
<dbReference type="SUPFAM" id="SSF144083">
    <property type="entry name" value="Magnesium transport protein CorA, transmembrane region"/>
    <property type="match status" value="1"/>
</dbReference>
<reference key="1">
    <citation type="journal article" date="1999" name="Nature">
        <title>Genomic sequence comparison of two unrelated isolates of the human gastric pathogen Helicobacter pylori.</title>
        <authorList>
            <person name="Alm R.A."/>
            <person name="Ling L.-S.L."/>
            <person name="Moir D.T."/>
            <person name="King B.L."/>
            <person name="Brown E.D."/>
            <person name="Doig P.C."/>
            <person name="Smith D.R."/>
            <person name="Noonan B."/>
            <person name="Guild B.C."/>
            <person name="deJonge B.L."/>
            <person name="Carmel G."/>
            <person name="Tummino P.J."/>
            <person name="Caruso A."/>
            <person name="Uria-Nickelsen M."/>
            <person name="Mills D.M."/>
            <person name="Ives C."/>
            <person name="Gibson R."/>
            <person name="Merberg D."/>
            <person name="Mills S.D."/>
            <person name="Jiang Q."/>
            <person name="Taylor D.E."/>
            <person name="Vovis G.F."/>
            <person name="Trust T.J."/>
        </authorList>
    </citation>
    <scope>NUCLEOTIDE SEQUENCE [LARGE SCALE GENOMIC DNA]</scope>
    <source>
        <strain>J99 / ATCC 700824</strain>
    </source>
</reference>
<comment type="function">
    <text evidence="1 2">Mediates influx of magnesium ions (By similarity). Alternates between open and closed states. Activated by low cytoplasmic Mg(2+) levels. Inactive when cytoplasmic Mg(2+) levels are high (By similarity).</text>
</comment>
<comment type="catalytic activity">
    <reaction evidence="1">
        <text>Mg(2+)(in) = Mg(2+)(out)</text>
        <dbReference type="Rhea" id="RHEA:29827"/>
        <dbReference type="ChEBI" id="CHEBI:18420"/>
    </reaction>
</comment>
<comment type="subunit">
    <text evidence="2">Homopentamer. In the absence of Mg(2+), interactions between subunits are weakened, and dimers, trimers and tetramers can be observed in vitro (By similarity).</text>
</comment>
<comment type="subcellular location">
    <subcellularLocation>
        <location evidence="1">Cell inner membrane</location>
        <topology evidence="2">Multi-pass membrane protein</topology>
    </subcellularLocation>
</comment>
<comment type="domain">
    <text evidence="2">The central ion permeation pathway is formed by the first transmembrane domain from each of the five subunits. Mg(2+) binding strengthens interactions between subunits and leads to the formation of a symmetrical homopentamer surrounding a closed ion permeation pathway. Low Mg(2+) concentrations trigger both a conformation change within each subunit and a loosening of the interactions between subunits. This results in an open ion conduction pathway. In addition, this results in a less symmetrical shape of the whole complex.</text>
</comment>
<comment type="similarity">
    <text evidence="4">Belongs to the CorA metal ion transporter (MIT) (TC 1.A.35) family.</text>
</comment>
<protein>
    <recommendedName>
        <fullName>Magnesium transport protein CorA</fullName>
    </recommendedName>
</protein>
<accession>Q9ZJP2</accession>
<sequence length="318" mass="37136">MVNVFFKQQKFVIKKRFNDFNGFDIEENEVLWFELINPTPNELATLSQEYAIHYNTDHSQRVSSVTKYWEDSSSVTINAFFTNQDENETFHMEMATFILSNNILFTIYYGTLEIFDSIQKKVLASPKKFEDGFDILTKIFEVYFEKGVECLEWINKQTSLLRKNIIFKETSTHDDILVRLSNLQEFNVALRDSFFDKRRIITALLRSNKVDSDTKNNLNIILTDFSSLVESTTVNLNSLDNIQNLFASQVNVEQNKIIKLFTVATMAMMPPTLIGTIYGMNFKFMPELEWQYGYLFALIVMAISTILPVIYFKKKGWL</sequence>
<feature type="chain" id="PRO_0000239097" description="Magnesium transport protein CorA">
    <location>
        <begin position="1"/>
        <end position="318"/>
    </location>
</feature>
<feature type="transmembrane region" description="Helical" evidence="3">
    <location>
        <begin position="260"/>
        <end position="280"/>
    </location>
</feature>
<feature type="transmembrane region" description="Helical" evidence="3">
    <location>
        <begin position="292"/>
        <end position="312"/>
    </location>
</feature>
<feature type="short sequence motif" description="Probable selectivity filter" evidence="2">
    <location>
        <begin position="279"/>
        <end position="281"/>
    </location>
</feature>
<feature type="site" description="Essential for ion permeation" evidence="2">
    <location>
        <position position="255"/>
    </location>
</feature>
<proteinExistence type="inferred from homology"/>